<feature type="chain" id="PRO_0000448840" description="Movement protein">
    <location>
        <begin position="1"/>
        <end position="266"/>
    </location>
</feature>
<feature type="region of interest" description="Disordered" evidence="3">
    <location>
        <begin position="211"/>
        <end position="244"/>
    </location>
</feature>
<feature type="compositionally biased region" description="Basic and acidic residues" evidence="3">
    <location>
        <begin position="230"/>
        <end position="244"/>
    </location>
</feature>
<evidence type="ECO:0000250" key="1">
    <source>
        <dbReference type="UniProtKB" id="P03583"/>
    </source>
</evidence>
<evidence type="ECO:0000250" key="2">
    <source>
        <dbReference type="UniProtKB" id="P69513"/>
    </source>
</evidence>
<evidence type="ECO:0000256" key="3">
    <source>
        <dbReference type="SAM" id="MobiDB-lite"/>
    </source>
</evidence>
<evidence type="ECO:0000269" key="4">
    <source>
    </source>
</evidence>
<evidence type="ECO:0000303" key="5">
    <source ref="3"/>
</evidence>
<evidence type="ECO:0000305" key="6"/>
<gene>
    <name type="primary">MP</name>
    <name type="synonym">MP30</name>
</gene>
<organism>
    <name type="scientific">Tomato brown rugose fruit virus (isolate TOBRFV/Tomato/Jordan/Tom1-Jo/2015)</name>
    <name type="common">ToBRFV</name>
    <dbReference type="NCBI Taxonomy" id="2654645"/>
    <lineage>
        <taxon>Viruses</taxon>
        <taxon>Riboviria</taxon>
        <taxon>Orthornavirae</taxon>
        <taxon>Kitrinoviricota</taxon>
        <taxon>Alsuviricetes</taxon>
        <taxon>Martellivirales</taxon>
        <taxon>Virgaviridae</taxon>
        <taxon>Tobamovirus</taxon>
        <taxon>Tomato brown rugose fruit virus</taxon>
    </lineage>
</organism>
<dbReference type="EMBL" id="KT383474">
    <property type="protein sequence ID" value="ALP48478.1"/>
    <property type="molecule type" value="Genomic_RNA"/>
</dbReference>
<dbReference type="EMBL" id="MK133093">
    <property type="protein sequence ID" value="AZQ25013.1"/>
    <property type="molecule type" value="Genomic_RNA"/>
</dbReference>
<dbReference type="RefSeq" id="YP_009182170.1">
    <property type="nucleotide sequence ID" value="NC_028478.1"/>
</dbReference>
<dbReference type="KEGG" id="vg:26373866"/>
<dbReference type="Proteomes" id="UP000203541">
    <property type="component" value="Segment"/>
</dbReference>
<dbReference type="GO" id="GO:0030430">
    <property type="term" value="C:host cell cytoplasm"/>
    <property type="evidence" value="ECO:0007669"/>
    <property type="project" value="UniProtKB-KW"/>
</dbReference>
<dbReference type="GO" id="GO:0044219">
    <property type="term" value="C:host cell plasmodesma"/>
    <property type="evidence" value="ECO:0007669"/>
    <property type="project" value="UniProtKB-SubCell"/>
</dbReference>
<dbReference type="GO" id="GO:0044163">
    <property type="term" value="C:host cytoskeleton"/>
    <property type="evidence" value="ECO:0007669"/>
    <property type="project" value="UniProtKB-SubCell"/>
</dbReference>
<dbReference type="GO" id="GO:0003677">
    <property type="term" value="F:DNA binding"/>
    <property type="evidence" value="ECO:0007669"/>
    <property type="project" value="UniProtKB-KW"/>
</dbReference>
<dbReference type="GO" id="GO:0003723">
    <property type="term" value="F:RNA binding"/>
    <property type="evidence" value="ECO:0007669"/>
    <property type="project" value="UniProtKB-KW"/>
</dbReference>
<dbReference type="GO" id="GO:0046740">
    <property type="term" value="P:transport of virus in host, cell to cell"/>
    <property type="evidence" value="ECO:0007669"/>
    <property type="project" value="UniProtKB-KW"/>
</dbReference>
<dbReference type="InterPro" id="IPR001022">
    <property type="entry name" value="TMV_movement"/>
</dbReference>
<dbReference type="InterPro" id="IPR028919">
    <property type="entry name" value="Viral_movement"/>
</dbReference>
<dbReference type="Pfam" id="PF01107">
    <property type="entry name" value="MP"/>
    <property type="match status" value="1"/>
</dbReference>
<dbReference type="PRINTS" id="PR00964">
    <property type="entry name" value="MOVEMENT"/>
</dbReference>
<reference key="1">
    <citation type="journal article" date="2016" name="Arch. Virol.">
        <title>A new tobamovirus infecting tomato crops in Jordan.</title>
        <authorList>
            <person name="Salem N."/>
            <person name="Mansour A."/>
            <person name="Ciuffo M."/>
            <person name="Falk B.W."/>
            <person name="Turina M."/>
        </authorList>
    </citation>
    <scope>NUCLEOTIDE SEQUENCE [LARGE SCALE GENOMIC DNA]</scope>
</reference>
<reference key="2">
    <citation type="journal article" date="2017" name="PLoS ONE">
        <title>A new Israeli tobamovirus isolate infects tomato plants harboring Tm-2(2) resistance genes.</title>
        <authorList>
            <person name="Luria N."/>
            <person name="Smith E."/>
            <person name="Reingold V."/>
            <person name="Bekelman I."/>
            <person name="Lapidot M."/>
            <person name="Levin I."/>
            <person name="Elad N."/>
            <person name="Tam Y."/>
            <person name="Sela N."/>
            <person name="Abu-Ras A."/>
            <person name="Ezra N."/>
            <person name="Haberman A."/>
            <person name="Yitzhak L."/>
            <person name="Lachman O."/>
            <person name="Dombrovsky A."/>
        </authorList>
    </citation>
    <scope>FUNCTION</scope>
</reference>
<reference key="3">
    <citation type="journal article" date="2019" name="Plant Pathol.">
        <title>Tomato brown rugose fruit disease: current distribution, knowledge and future prospects.</title>
        <authorList>
            <person name="Oladokun J.O."/>
            <person name="Halabi M.H."/>
            <person name="Barua P."/>
            <person name="Nath P.D."/>
        </authorList>
    </citation>
    <scope>REVIEW</scope>
</reference>
<keyword id="KW-0165">Cleavage on pair of basic residues</keyword>
<keyword id="KW-0238">DNA-binding</keyword>
<keyword id="KW-1031">Host cell junction</keyword>
<keyword id="KW-1035">Host cytoplasm</keyword>
<keyword id="KW-1037">Host cytoskeleton</keyword>
<keyword id="KW-0945">Host-virus interaction</keyword>
<keyword id="KW-0694">RNA-binding</keyword>
<keyword id="KW-0813">Transport</keyword>
<keyword id="KW-0916">Viral movement protein</keyword>
<comment type="function">
    <text evidence="1 4">Transports viral genome to neighboring plant cells directly through plasmosdesmata, without any budding. The movement protein allows efficient cell to cell propagation, by bypassing the host cell wall barrier. Forms a ribonucleoprotein complex with viral RNA. Binds microtubules and modulates microtubule stability. Can bind double-stranded DNA. Evades host resistance (R) protein (e.g. tomato ToMV resistance protein TM-2(2), AC Q71BG9) in ToMV/TMV resistant plants (PubMed:28107419).</text>
</comment>
<comment type="subunit">
    <text evidence="2">Binds to host RBCS at the plasmodesmata; this interaction seems required for viral systemic movement.</text>
</comment>
<comment type="subcellular location">
    <subcellularLocation>
        <location evidence="2">Host cytoplasm</location>
        <location evidence="2">Host cytoskeleton</location>
    </subcellularLocation>
    <subcellularLocation>
        <location evidence="2">Host cell junction</location>
        <location evidence="2">Host plasmodesma</location>
    </subcellularLocation>
    <text evidence="2">Binds to the host cytoskeleton before being transported to the host plasmodesmata.</text>
</comment>
<comment type="miscellaneous">
    <text evidence="5">The ToBRFV MVP has gained resistance to antiviral Tm-2(2) defense, thereby allowing it to spread from Jordan to most of the world tomato's cultures and pose a major threat to agriculture.</text>
</comment>
<comment type="similarity">
    <text evidence="6">Belongs to the tobamovirus movement protein family.</text>
</comment>
<name>MVP_TBRFV</name>
<organismHost>
    <name type="scientific">Solanum lycopersicum</name>
    <name type="common">Tomato</name>
    <name type="synonym">Lycopersicon esculentum</name>
    <dbReference type="NCBI Taxonomy" id="4081"/>
</organismHost>
<sequence length="266" mass="29791">MALVKGKVNINEFIDLSKSEKFLPSMFTPVKSVMISKVDKILVHEDESLSEVNLLKGVKLIDGGYVHLAGLVVTGEWNLPDNCRGGVSVCLVDKRMERADEATLASYYTAAAKKRFQFKVVPNYNITTKDAEKAVWQVLVNIRNVKIAAGYCPLSLEFVSVCIVYKNIIKLGLREKITSVTDGGPMELSEEVVDEFMEEVPMSVRLAKFRSKTGKKFSSKSENNSGNNRPKPDKNQRKEKGLKVRVEKDNLIDNELETYVADSDSY</sequence>
<accession>A0A0S2SZW1</accession>
<proteinExistence type="inferred from homology"/>
<protein>
    <recommendedName>
        <fullName>Movement protein</fullName>
    </recommendedName>
    <alternativeName>
        <fullName>30 kDa protein</fullName>
    </alternativeName>
    <alternativeName>
        <fullName>Cell-to-cell transport protein</fullName>
    </alternativeName>
</protein>